<reference key="1">
    <citation type="submission" date="2006-12" db="EMBL/GenBank/DDBJ databases">
        <title>Complete sequence of chromosome 1 of Nocardioides sp. JS614.</title>
        <authorList>
            <person name="Copeland A."/>
            <person name="Lucas S."/>
            <person name="Lapidus A."/>
            <person name="Barry K."/>
            <person name="Detter J.C."/>
            <person name="Glavina del Rio T."/>
            <person name="Hammon N."/>
            <person name="Israni S."/>
            <person name="Dalin E."/>
            <person name="Tice H."/>
            <person name="Pitluck S."/>
            <person name="Thompson L.S."/>
            <person name="Brettin T."/>
            <person name="Bruce D."/>
            <person name="Han C."/>
            <person name="Tapia R."/>
            <person name="Schmutz J."/>
            <person name="Larimer F."/>
            <person name="Land M."/>
            <person name="Hauser L."/>
            <person name="Kyrpides N."/>
            <person name="Kim E."/>
            <person name="Mattes T."/>
            <person name="Gossett J."/>
            <person name="Richardson P."/>
        </authorList>
    </citation>
    <scope>NUCLEOTIDE SEQUENCE [LARGE SCALE GENOMIC DNA]</scope>
    <source>
        <strain>ATCC BAA-499 / JS614</strain>
    </source>
</reference>
<sequence>MAHKKGAASTKNGRDSNSQRLGVKRYGGQVVNAGEIIVRQRGTHFHPGSGVGRGGDDTLFALVAGAVQFGTRRGRRVVNIVPGE</sequence>
<comment type="similarity">
    <text evidence="1">Belongs to the bacterial ribosomal protein bL27 family.</text>
</comment>
<accession>A1SMB5</accession>
<evidence type="ECO:0000255" key="1">
    <source>
        <dbReference type="HAMAP-Rule" id="MF_00539"/>
    </source>
</evidence>
<evidence type="ECO:0000256" key="2">
    <source>
        <dbReference type="SAM" id="MobiDB-lite"/>
    </source>
</evidence>
<evidence type="ECO:0000305" key="3"/>
<protein>
    <recommendedName>
        <fullName evidence="1">Large ribosomal subunit protein bL27</fullName>
    </recommendedName>
    <alternativeName>
        <fullName evidence="3">50S ribosomal protein L27</fullName>
    </alternativeName>
</protein>
<proteinExistence type="inferred from homology"/>
<feature type="chain" id="PRO_1000017535" description="Large ribosomal subunit protein bL27">
    <location>
        <begin position="1"/>
        <end position="84"/>
    </location>
</feature>
<feature type="region of interest" description="Disordered" evidence="2">
    <location>
        <begin position="1"/>
        <end position="24"/>
    </location>
</feature>
<feature type="compositionally biased region" description="Polar residues" evidence="2">
    <location>
        <begin position="9"/>
        <end position="20"/>
    </location>
</feature>
<keyword id="KW-1185">Reference proteome</keyword>
<keyword id="KW-0687">Ribonucleoprotein</keyword>
<keyword id="KW-0689">Ribosomal protein</keyword>
<organism>
    <name type="scientific">Nocardioides sp. (strain ATCC BAA-499 / JS614)</name>
    <dbReference type="NCBI Taxonomy" id="196162"/>
    <lineage>
        <taxon>Bacteria</taxon>
        <taxon>Bacillati</taxon>
        <taxon>Actinomycetota</taxon>
        <taxon>Actinomycetes</taxon>
        <taxon>Propionibacteriales</taxon>
        <taxon>Nocardioidaceae</taxon>
        <taxon>Nocardioides</taxon>
    </lineage>
</organism>
<dbReference type="EMBL" id="CP000509">
    <property type="protein sequence ID" value="ABL82950.1"/>
    <property type="molecule type" value="Genomic_DNA"/>
</dbReference>
<dbReference type="RefSeq" id="WP_011756883.1">
    <property type="nucleotide sequence ID" value="NC_008699.1"/>
</dbReference>
<dbReference type="SMR" id="A1SMB5"/>
<dbReference type="STRING" id="196162.Noca_3450"/>
<dbReference type="KEGG" id="nca:Noca_3450"/>
<dbReference type="eggNOG" id="COG0211">
    <property type="taxonomic scope" value="Bacteria"/>
</dbReference>
<dbReference type="HOGENOM" id="CLU_095424_4_0_11"/>
<dbReference type="OrthoDB" id="9803474at2"/>
<dbReference type="Proteomes" id="UP000000640">
    <property type="component" value="Chromosome"/>
</dbReference>
<dbReference type="GO" id="GO:0022625">
    <property type="term" value="C:cytosolic large ribosomal subunit"/>
    <property type="evidence" value="ECO:0007669"/>
    <property type="project" value="TreeGrafter"/>
</dbReference>
<dbReference type="GO" id="GO:0003735">
    <property type="term" value="F:structural constituent of ribosome"/>
    <property type="evidence" value="ECO:0007669"/>
    <property type="project" value="InterPro"/>
</dbReference>
<dbReference type="GO" id="GO:0006412">
    <property type="term" value="P:translation"/>
    <property type="evidence" value="ECO:0007669"/>
    <property type="project" value="UniProtKB-UniRule"/>
</dbReference>
<dbReference type="FunFam" id="2.40.50.100:FF:000020">
    <property type="entry name" value="50S ribosomal protein L27"/>
    <property type="match status" value="1"/>
</dbReference>
<dbReference type="Gene3D" id="2.40.50.100">
    <property type="match status" value="1"/>
</dbReference>
<dbReference type="HAMAP" id="MF_00539">
    <property type="entry name" value="Ribosomal_bL27"/>
    <property type="match status" value="1"/>
</dbReference>
<dbReference type="InterPro" id="IPR001684">
    <property type="entry name" value="Ribosomal_bL27"/>
</dbReference>
<dbReference type="InterPro" id="IPR018261">
    <property type="entry name" value="Ribosomal_bL27_CS"/>
</dbReference>
<dbReference type="NCBIfam" id="TIGR00062">
    <property type="entry name" value="L27"/>
    <property type="match status" value="1"/>
</dbReference>
<dbReference type="PANTHER" id="PTHR15893:SF0">
    <property type="entry name" value="LARGE RIBOSOMAL SUBUNIT PROTEIN BL27M"/>
    <property type="match status" value="1"/>
</dbReference>
<dbReference type="PANTHER" id="PTHR15893">
    <property type="entry name" value="RIBOSOMAL PROTEIN L27"/>
    <property type="match status" value="1"/>
</dbReference>
<dbReference type="Pfam" id="PF01016">
    <property type="entry name" value="Ribosomal_L27"/>
    <property type="match status" value="1"/>
</dbReference>
<dbReference type="PRINTS" id="PR00063">
    <property type="entry name" value="RIBOSOMALL27"/>
</dbReference>
<dbReference type="SUPFAM" id="SSF110324">
    <property type="entry name" value="Ribosomal L27 protein-like"/>
    <property type="match status" value="1"/>
</dbReference>
<dbReference type="PROSITE" id="PS00831">
    <property type="entry name" value="RIBOSOMAL_L27"/>
    <property type="match status" value="1"/>
</dbReference>
<gene>
    <name evidence="1" type="primary">rpmA</name>
    <name type="ordered locus">Noca_3450</name>
</gene>
<name>RL27_NOCSJ</name>